<accession>Q11010</accession>
<dbReference type="EC" id="3.4.11.2"/>
<dbReference type="EMBL" id="L23172">
    <property type="protein sequence ID" value="AAA26696.1"/>
    <property type="molecule type" value="Genomic_DNA"/>
</dbReference>
<dbReference type="SMR" id="Q11010"/>
<dbReference type="MEROPS" id="M01.009"/>
<dbReference type="GO" id="GO:0005737">
    <property type="term" value="C:cytoplasm"/>
    <property type="evidence" value="ECO:0007669"/>
    <property type="project" value="UniProtKB-SubCell"/>
</dbReference>
<dbReference type="GO" id="GO:0005615">
    <property type="term" value="C:extracellular space"/>
    <property type="evidence" value="ECO:0007669"/>
    <property type="project" value="TreeGrafter"/>
</dbReference>
<dbReference type="GO" id="GO:0016020">
    <property type="term" value="C:membrane"/>
    <property type="evidence" value="ECO:0007669"/>
    <property type="project" value="TreeGrafter"/>
</dbReference>
<dbReference type="GO" id="GO:0016285">
    <property type="term" value="F:alanyl aminopeptidase activity"/>
    <property type="evidence" value="ECO:0007669"/>
    <property type="project" value="UniProtKB-EC"/>
</dbReference>
<dbReference type="GO" id="GO:0070006">
    <property type="term" value="F:metalloaminopeptidase activity"/>
    <property type="evidence" value="ECO:0007669"/>
    <property type="project" value="TreeGrafter"/>
</dbReference>
<dbReference type="GO" id="GO:0042277">
    <property type="term" value="F:peptide binding"/>
    <property type="evidence" value="ECO:0007669"/>
    <property type="project" value="TreeGrafter"/>
</dbReference>
<dbReference type="GO" id="GO:0008270">
    <property type="term" value="F:zinc ion binding"/>
    <property type="evidence" value="ECO:0007669"/>
    <property type="project" value="InterPro"/>
</dbReference>
<dbReference type="GO" id="GO:0043171">
    <property type="term" value="P:peptide catabolic process"/>
    <property type="evidence" value="ECO:0007669"/>
    <property type="project" value="TreeGrafter"/>
</dbReference>
<dbReference type="GO" id="GO:0006508">
    <property type="term" value="P:proteolysis"/>
    <property type="evidence" value="ECO:0007669"/>
    <property type="project" value="UniProtKB-KW"/>
</dbReference>
<dbReference type="CDD" id="cd09602">
    <property type="entry name" value="M1_APN"/>
    <property type="match status" value="1"/>
</dbReference>
<dbReference type="FunFam" id="1.10.390.10:FF:000004">
    <property type="entry name" value="Aminopeptidase N"/>
    <property type="match status" value="1"/>
</dbReference>
<dbReference type="FunFam" id="2.60.40.1730:FF:000010">
    <property type="entry name" value="Putative aminopeptidase N"/>
    <property type="match status" value="1"/>
</dbReference>
<dbReference type="Gene3D" id="1.10.390.10">
    <property type="entry name" value="Neutral Protease Domain 2"/>
    <property type="match status" value="1"/>
</dbReference>
<dbReference type="Gene3D" id="2.60.40.1730">
    <property type="entry name" value="tricorn interacting facor f3 domain"/>
    <property type="match status" value="1"/>
</dbReference>
<dbReference type="InterPro" id="IPR045357">
    <property type="entry name" value="Aminopeptidase_N-like_N"/>
</dbReference>
<dbReference type="InterPro" id="IPR042097">
    <property type="entry name" value="Aminopeptidase_N-like_N_sf"/>
</dbReference>
<dbReference type="InterPro" id="IPR024571">
    <property type="entry name" value="ERAP1-like_C_dom"/>
</dbReference>
<dbReference type="InterPro" id="IPR012778">
    <property type="entry name" value="Pept_M1_aminopeptidase"/>
</dbReference>
<dbReference type="InterPro" id="IPR001930">
    <property type="entry name" value="Peptidase_M1"/>
</dbReference>
<dbReference type="InterPro" id="IPR050344">
    <property type="entry name" value="Peptidase_M1_aminopeptidases"/>
</dbReference>
<dbReference type="InterPro" id="IPR014782">
    <property type="entry name" value="Peptidase_M1_dom"/>
</dbReference>
<dbReference type="InterPro" id="IPR027268">
    <property type="entry name" value="Peptidase_M4/M1_CTD_sf"/>
</dbReference>
<dbReference type="NCBIfam" id="TIGR02412">
    <property type="entry name" value="pepN_strep_liv"/>
    <property type="match status" value="1"/>
</dbReference>
<dbReference type="PANTHER" id="PTHR11533">
    <property type="entry name" value="PROTEASE M1 ZINC METALLOPROTEASE"/>
    <property type="match status" value="1"/>
</dbReference>
<dbReference type="PANTHER" id="PTHR11533:SF174">
    <property type="entry name" value="PUROMYCIN-SENSITIVE AMINOPEPTIDASE-RELATED"/>
    <property type="match status" value="1"/>
</dbReference>
<dbReference type="Pfam" id="PF11838">
    <property type="entry name" value="ERAP1_C"/>
    <property type="match status" value="1"/>
</dbReference>
<dbReference type="Pfam" id="PF01433">
    <property type="entry name" value="Peptidase_M1"/>
    <property type="match status" value="1"/>
</dbReference>
<dbReference type="Pfam" id="PF17900">
    <property type="entry name" value="Peptidase_M1_N"/>
    <property type="match status" value="1"/>
</dbReference>
<dbReference type="PRINTS" id="PR00756">
    <property type="entry name" value="ALADIPTASE"/>
</dbReference>
<dbReference type="SUPFAM" id="SSF63737">
    <property type="entry name" value="Leukotriene A4 hydrolase N-terminal domain"/>
    <property type="match status" value="1"/>
</dbReference>
<dbReference type="SUPFAM" id="SSF55486">
    <property type="entry name" value="Metalloproteases ('zincins'), catalytic domain"/>
    <property type="match status" value="1"/>
</dbReference>
<dbReference type="PROSITE" id="PS00142">
    <property type="entry name" value="ZINC_PROTEASE"/>
    <property type="match status" value="1"/>
</dbReference>
<evidence type="ECO:0000250" key="1"/>
<evidence type="ECO:0000255" key="2">
    <source>
        <dbReference type="PROSITE-ProRule" id="PRU10095"/>
    </source>
</evidence>
<evidence type="ECO:0000305" key="3"/>
<proteinExistence type="evidence at protein level"/>
<reference key="1">
    <citation type="journal article" date="1994" name="Gene">
        <title>The aminopeptidase N-encoding pepN gene of Streptomyces lividans 66.</title>
        <authorList>
            <person name="Butler M.J."/>
            <person name="Aphale J.S."/>
            <person name="Binnie C."/>
            <person name="Dizonno M.A."/>
            <person name="Krygsman P."/>
            <person name="Soltes G.A."/>
            <person name="Walczyk E."/>
            <person name="Malek L.T."/>
        </authorList>
    </citation>
    <scope>NUCLEOTIDE SEQUENCE [GENOMIC DNA]</scope>
    <scope>PROTEIN SEQUENCE OF 415-439</scope>
    <source>
        <strain>66 / 1326</strain>
    </source>
</reference>
<reference key="2">
    <citation type="journal article" date="1994" name="J. Ind. Microbiol.">
        <title>Intracellular aminopeptidases in Streptomyces lividans 66.</title>
        <authorList>
            <person name="Butler M.J."/>
            <person name="Aphale J.S."/>
            <person name="Dizonno M.A."/>
            <person name="Krygsman P."/>
            <person name="Walczyk E."/>
            <person name="Malek L.T."/>
        </authorList>
    </citation>
    <scope>NUCLEOTIDE SEQUENCE [GENOMIC DNA]</scope>
    <source>
        <strain>66 / 1326</strain>
    </source>
</reference>
<feature type="chain" id="PRO_0000095076" description="Aminopeptidase N">
    <location>
        <begin position="1"/>
        <end position="857"/>
    </location>
</feature>
<feature type="active site" description="Proton acceptor" evidence="2">
    <location>
        <position position="299"/>
    </location>
</feature>
<feature type="binding site" evidence="1">
    <location>
        <position position="130"/>
    </location>
    <ligand>
        <name>substrate</name>
    </ligand>
</feature>
<feature type="binding site" evidence="1">
    <location>
        <begin position="264"/>
        <end position="268"/>
    </location>
    <ligand>
        <name>substrate</name>
    </ligand>
</feature>
<feature type="binding site" evidence="2">
    <location>
        <position position="298"/>
    </location>
    <ligand>
        <name>Zn(2+)</name>
        <dbReference type="ChEBI" id="CHEBI:29105"/>
        <note>catalytic</note>
    </ligand>
</feature>
<feature type="binding site" evidence="2">
    <location>
        <position position="302"/>
    </location>
    <ligand>
        <name>Zn(2+)</name>
        <dbReference type="ChEBI" id="CHEBI:29105"/>
        <note>catalytic</note>
    </ligand>
</feature>
<feature type="binding site" evidence="2">
    <location>
        <position position="321"/>
    </location>
    <ligand>
        <name>Zn(2+)</name>
        <dbReference type="ChEBI" id="CHEBI:29105"/>
        <note>catalytic</note>
    </ligand>
</feature>
<feature type="site" description="Transition state stabilizer" evidence="1">
    <location>
        <position position="386"/>
    </location>
</feature>
<comment type="function">
    <text>Aminopeptidase with broad substrate specificity to several peptides. Shows strong preference for leucine but also cleaves next to Arg and Lys in peptide-bond-containing substrates.</text>
</comment>
<comment type="catalytic activity">
    <reaction>
        <text>Release of an N-terminal amino acid, Xaa-|-Yaa- from a peptide, amide or arylamide. Xaa is preferably Ala, but may be most amino acids including Pro (slow action). When a terminal hydrophobic residue is followed by a prolyl residue, the two may be released as an intact Xaa-Pro dipeptide.</text>
        <dbReference type="EC" id="3.4.11.2"/>
    </reaction>
</comment>
<comment type="cofactor">
    <cofactor evidence="1">
        <name>Zn(2+)</name>
        <dbReference type="ChEBI" id="CHEBI:29105"/>
    </cofactor>
    <text evidence="1">Binds 1 zinc ion per subunit.</text>
</comment>
<comment type="subunit">
    <text>Monomer.</text>
</comment>
<comment type="subcellular location">
    <subcellularLocation>
        <location>Cytoplasm</location>
    </subcellularLocation>
</comment>
<comment type="PTM">
    <text>The N-terminus is blocked.</text>
</comment>
<comment type="similarity">
    <text evidence="3">Belongs to the peptidase M1 family.</text>
</comment>
<gene>
    <name type="primary">pepN</name>
</gene>
<keyword id="KW-0031">Aminopeptidase</keyword>
<keyword id="KW-0963">Cytoplasm</keyword>
<keyword id="KW-0903">Direct protein sequencing</keyword>
<keyword id="KW-0378">Hydrolase</keyword>
<keyword id="KW-0479">Metal-binding</keyword>
<keyword id="KW-0482">Metalloprotease</keyword>
<keyword id="KW-0645">Protease</keyword>
<keyword id="KW-0862">Zinc</keyword>
<name>AMPN_STRLI</name>
<sequence length="857" mass="94424">MPGTNLTREEARQRATLLTVDSYEIDLDLTGAQEGGTYRSVTTVRFDVAEGGGESFIDLVAPTVHEVTLNGDALDTAEVFQDSRIALPGLLPGRNILRVVADCAYTNTGEGLHRFVDPVDDQAYLYTQFEVPDARRVFASFEQPDLKATFQFTVKAPEGWTVISNSPTPEPKDNVWEFEPTPRISSYVTALIVGPYHSVHSVYEKDGQSVPLGIYCRPSLAEHLDADAIFEVTRQGFDWFQEKFDYAYPFKKYDQLFVPEFNAGAMENAGAVTIRDQYVFRSKVTDAAYEVRAATILHELAHMWFGDLVTMEWWNDLWLNESFATYAEAACQAAAPGSKWPHSWTTFANQMKTWAYRQDQLPSTHPIMADISDLDDVLVNFDGITYAKGASVLKQLVAYVGEEAFFKGVQAYFKRHAFGNTRLSDLLGALEETSGRDLKTWSKAWLETAGINVLRPEIETDADGVITSFAIRQEAPALPAGAKGEPTLRPHRIAIGAYDLDGAGKLVRGDRVELDVDGELTAVPQLVGKARPAVLLLNDDDLSYAKVRLDEQSLAVVTEHLGDFTESLPRALCWASAWDMTRDAELATRDYLALVLSGIGKESDIGVVQSLHRQVKLAIDQYAAPTAREALLTRWTEATLAHLRAAEAGSDHQLAWARAFAATARTPEQLDLLDALLDGTQTIEGLAVDTELRWAFVQRLAAVGRFGGSEIAAEYERDKTAAGERHAATARAARPTEAAKAEAWESVVESDKLPNAVQEAVIAGFVQTDQRELLAAYTERYFEALKDVWASRSHEMAQQIAVGLYPAVQVSQDTLDRTDAWLASAEPNAALRRLVSESRSGIERALRAQAADAAAAE</sequence>
<organism>
    <name type="scientific">Streptomyces lividans</name>
    <dbReference type="NCBI Taxonomy" id="1916"/>
    <lineage>
        <taxon>Bacteria</taxon>
        <taxon>Bacillati</taxon>
        <taxon>Actinomycetota</taxon>
        <taxon>Actinomycetes</taxon>
        <taxon>Kitasatosporales</taxon>
        <taxon>Streptomycetaceae</taxon>
        <taxon>Streptomyces</taxon>
    </lineage>
</organism>
<protein>
    <recommendedName>
        <fullName>Aminopeptidase N</fullName>
        <ecNumber>3.4.11.2</ecNumber>
    </recommendedName>
    <alternativeName>
        <fullName>Alanine aminopeptidase</fullName>
    </alternativeName>
    <alternativeName>
        <fullName>Lysyl aminopeptidase</fullName>
        <shortName>Lys-AP</shortName>
    </alternativeName>
</protein>